<comment type="function">
    <text evidence="7">Catalyzes the conversion of hercynylcysteine sulfoxide to ergothioneine by cleaving the cysteine residue at the sulfur atom, the last step in the biosynthesis pathway of ergothioneine.</text>
</comment>
<comment type="catalytic activity">
    <reaction evidence="1">
        <text>S-(hercyn-2-yl)-L-cysteine S-oxide + AH2 + H(+) = ergothioneine + pyruvate + A + NH4(+)</text>
        <dbReference type="Rhea" id="RHEA:42688"/>
        <dbReference type="ChEBI" id="CHEBI:13193"/>
        <dbReference type="ChEBI" id="CHEBI:15361"/>
        <dbReference type="ChEBI" id="CHEBI:15378"/>
        <dbReference type="ChEBI" id="CHEBI:17499"/>
        <dbReference type="ChEBI" id="CHEBI:28938"/>
        <dbReference type="ChEBI" id="CHEBI:82706"/>
        <dbReference type="ChEBI" id="CHEBI:134344"/>
    </reaction>
</comment>
<comment type="cofactor">
    <cofactor evidence="2">
        <name>pyridoxal 5'-phosphate</name>
        <dbReference type="ChEBI" id="CHEBI:597326"/>
    </cofactor>
</comment>
<comment type="pathway">
    <text evidence="4">Amino-acid biosynthesis; ergothioneine biosynthesis.</text>
</comment>
<comment type="subcellular location">
    <subcellularLocation>
        <location evidence="3">Cytoplasm</location>
    </subcellularLocation>
    <subcellularLocation>
        <location evidence="4">Nucleus</location>
    </subcellularLocation>
</comment>
<comment type="disruption phenotype">
    <text evidence="4">Shows substantial decrease in ergothioneine, accompanied by accumulation of its immediate precursor, hercynylcysteine sulfoxide.</text>
</comment>
<comment type="similarity">
    <text evidence="6">Belongs to the class-V pyridoxal-phosphate-dependent aminotransferase family. EgtE subfamily.</text>
</comment>
<name>EGT2_SCHPO</name>
<proteinExistence type="inferred from homology"/>
<keyword id="KW-0963">Cytoplasm</keyword>
<keyword id="KW-0456">Lyase</keyword>
<keyword id="KW-0539">Nucleus</keyword>
<keyword id="KW-0663">Pyridoxal phosphate</keyword>
<keyword id="KW-1185">Reference proteome</keyword>
<feature type="chain" id="PRO_0000310318" description="Hercynylcysteine sulfoxide lyase">
    <location>
        <begin position="1"/>
        <end position="392"/>
    </location>
</feature>
<feature type="modified residue" description="N6-(pyridoxal phosphate)lysine" evidence="2">
    <location>
        <position position="219"/>
    </location>
</feature>
<reference key="1">
    <citation type="journal article" date="2002" name="Nature">
        <title>The genome sequence of Schizosaccharomyces pombe.</title>
        <authorList>
            <person name="Wood V."/>
            <person name="Gwilliam R."/>
            <person name="Rajandream M.A."/>
            <person name="Lyne M.H."/>
            <person name="Lyne R."/>
            <person name="Stewart A."/>
            <person name="Sgouros J.G."/>
            <person name="Peat N."/>
            <person name="Hayles J."/>
            <person name="Baker S.G."/>
            <person name="Basham D."/>
            <person name="Bowman S."/>
            <person name="Brooks K."/>
            <person name="Brown D."/>
            <person name="Brown S."/>
            <person name="Chillingworth T."/>
            <person name="Churcher C.M."/>
            <person name="Collins M."/>
            <person name="Connor R."/>
            <person name="Cronin A."/>
            <person name="Davis P."/>
            <person name="Feltwell T."/>
            <person name="Fraser A."/>
            <person name="Gentles S."/>
            <person name="Goble A."/>
            <person name="Hamlin N."/>
            <person name="Harris D.E."/>
            <person name="Hidalgo J."/>
            <person name="Hodgson G."/>
            <person name="Holroyd S."/>
            <person name="Hornsby T."/>
            <person name="Howarth S."/>
            <person name="Huckle E.J."/>
            <person name="Hunt S."/>
            <person name="Jagels K."/>
            <person name="James K.D."/>
            <person name="Jones L."/>
            <person name="Jones M."/>
            <person name="Leather S."/>
            <person name="McDonald S."/>
            <person name="McLean J."/>
            <person name="Mooney P."/>
            <person name="Moule S."/>
            <person name="Mungall K.L."/>
            <person name="Murphy L.D."/>
            <person name="Niblett D."/>
            <person name="Odell C."/>
            <person name="Oliver K."/>
            <person name="O'Neil S."/>
            <person name="Pearson D."/>
            <person name="Quail M.A."/>
            <person name="Rabbinowitsch E."/>
            <person name="Rutherford K.M."/>
            <person name="Rutter S."/>
            <person name="Saunders D."/>
            <person name="Seeger K."/>
            <person name="Sharp S."/>
            <person name="Skelton J."/>
            <person name="Simmonds M.N."/>
            <person name="Squares R."/>
            <person name="Squares S."/>
            <person name="Stevens K."/>
            <person name="Taylor K."/>
            <person name="Taylor R.G."/>
            <person name="Tivey A."/>
            <person name="Walsh S.V."/>
            <person name="Warren T."/>
            <person name="Whitehead S."/>
            <person name="Woodward J.R."/>
            <person name="Volckaert G."/>
            <person name="Aert R."/>
            <person name="Robben J."/>
            <person name="Grymonprez B."/>
            <person name="Weltjens I."/>
            <person name="Vanstreels E."/>
            <person name="Rieger M."/>
            <person name="Schaefer M."/>
            <person name="Mueller-Auer S."/>
            <person name="Gabel C."/>
            <person name="Fuchs M."/>
            <person name="Duesterhoeft A."/>
            <person name="Fritzc C."/>
            <person name="Holzer E."/>
            <person name="Moestl D."/>
            <person name="Hilbert H."/>
            <person name="Borzym K."/>
            <person name="Langer I."/>
            <person name="Beck A."/>
            <person name="Lehrach H."/>
            <person name="Reinhardt R."/>
            <person name="Pohl T.M."/>
            <person name="Eger P."/>
            <person name="Zimmermann W."/>
            <person name="Wedler H."/>
            <person name="Wambutt R."/>
            <person name="Purnelle B."/>
            <person name="Goffeau A."/>
            <person name="Cadieu E."/>
            <person name="Dreano S."/>
            <person name="Gloux S."/>
            <person name="Lelaure V."/>
            <person name="Mottier S."/>
            <person name="Galibert F."/>
            <person name="Aves S.J."/>
            <person name="Xiang Z."/>
            <person name="Hunt C."/>
            <person name="Moore K."/>
            <person name="Hurst S.M."/>
            <person name="Lucas M."/>
            <person name="Rochet M."/>
            <person name="Gaillardin C."/>
            <person name="Tallada V.A."/>
            <person name="Garzon A."/>
            <person name="Thode G."/>
            <person name="Daga R.R."/>
            <person name="Cruzado L."/>
            <person name="Jimenez J."/>
            <person name="Sanchez M."/>
            <person name="del Rey F."/>
            <person name="Benito J."/>
            <person name="Dominguez A."/>
            <person name="Revuelta J.L."/>
            <person name="Moreno S."/>
            <person name="Armstrong J."/>
            <person name="Forsburg S.L."/>
            <person name="Cerutti L."/>
            <person name="Lowe T."/>
            <person name="McCombie W.R."/>
            <person name="Paulsen I."/>
            <person name="Potashkin J."/>
            <person name="Shpakovski G.V."/>
            <person name="Ussery D."/>
            <person name="Barrell B.G."/>
            <person name="Nurse P."/>
        </authorList>
    </citation>
    <scope>NUCLEOTIDE SEQUENCE [LARGE SCALE GENOMIC DNA]</scope>
    <source>
        <strain>972 / ATCC 24843</strain>
    </source>
</reference>
<reference key="2">
    <citation type="journal article" date="2006" name="Nat. Biotechnol.">
        <title>ORFeome cloning and global analysis of protein localization in the fission yeast Schizosaccharomyces pombe.</title>
        <authorList>
            <person name="Matsuyama A."/>
            <person name="Arai R."/>
            <person name="Yashiroda Y."/>
            <person name="Shirai A."/>
            <person name="Kamata A."/>
            <person name="Sekido S."/>
            <person name="Kobayashi Y."/>
            <person name="Hashimoto A."/>
            <person name="Hamamoto M."/>
            <person name="Hiraoka Y."/>
            <person name="Horinouchi S."/>
            <person name="Yoshida M."/>
        </authorList>
    </citation>
    <scope>SUBCELLULAR LOCATION [LARGE SCALE ANALYSIS]</scope>
</reference>
<reference key="3">
    <citation type="journal article" date="2014" name="PLoS ONE">
        <title>Genetic and metabolomic dissection of the ergothioneine and selenoneine biosynthetic pathway in the fission yeast, S. pombe, and construction of an overproduction system.</title>
        <authorList>
            <person name="Pluskal T."/>
            <person name="Ueno M."/>
            <person name="Yanagida M."/>
        </authorList>
    </citation>
    <scope>FUNCTION</scope>
    <scope>DISRUPTION PHENOTYPE</scope>
</reference>
<sequence length="392" mass="44535">MAENNVYGHEMKKHFMLDPDYVNVNNGSCGTESLAVYNKHVQLLKEAQSKPDFMCNAYMPMYMEATRNEVAKLIGADSSNIVFCNSATDGISTVLLTFPWEQNDEILMLNVAYPTCTYAADFAKNQHNLRLDVIDVGVEIDEDLFLKEVEQRFLQSKPRAFICDILSSMPVILFPWEKVVKLCKKYNIVSIIDGAHAIGHIPMNLANVDPDFLFTNAHKWLNSPAACTVLYVSAKNHNLIEALPLSYGYGLREKESIAVDTLTNRFVNSFKQDLPKFIAVGEAIKFRKSIGGEEKIQQYCHEIALKGAEIISKELGTSFIKPPYPVAMVNVEVPLRNIPSIETQKVFWPKYNTFLRFMEFKGKFYTRLSGAVYLEESDFYYIAKVIKDFCSL</sequence>
<accession>O94431</accession>
<organism>
    <name type="scientific">Schizosaccharomyces pombe (strain 972 / ATCC 24843)</name>
    <name type="common">Fission yeast</name>
    <dbReference type="NCBI Taxonomy" id="284812"/>
    <lineage>
        <taxon>Eukaryota</taxon>
        <taxon>Fungi</taxon>
        <taxon>Dikarya</taxon>
        <taxon>Ascomycota</taxon>
        <taxon>Taphrinomycotina</taxon>
        <taxon>Schizosaccharomycetes</taxon>
        <taxon>Schizosaccharomycetales</taxon>
        <taxon>Schizosaccharomycetaceae</taxon>
        <taxon>Schizosaccharomyces</taxon>
    </lineage>
</organism>
<dbReference type="EC" id="4.4.1.-" evidence="1"/>
<dbReference type="EMBL" id="CU329671">
    <property type="protein sequence ID" value="CAA22532.1"/>
    <property type="molecule type" value="Genomic_DNA"/>
</dbReference>
<dbReference type="PIR" id="T40624">
    <property type="entry name" value="T40624"/>
</dbReference>
<dbReference type="RefSeq" id="NP_595091.1">
    <property type="nucleotide sequence ID" value="NM_001020998.2"/>
</dbReference>
<dbReference type="SMR" id="O94431"/>
<dbReference type="BioGRID" id="277607">
    <property type="interactions" value="10"/>
</dbReference>
<dbReference type="FunCoup" id="O94431">
    <property type="interactions" value="16"/>
</dbReference>
<dbReference type="STRING" id="284812.O94431"/>
<dbReference type="PaxDb" id="4896-SPBC660.12c.1"/>
<dbReference type="EnsemblFungi" id="SPBC660.12c.1">
    <property type="protein sequence ID" value="SPBC660.12c.1:pep"/>
    <property type="gene ID" value="SPBC660.12c"/>
</dbReference>
<dbReference type="GeneID" id="2541092"/>
<dbReference type="KEGG" id="spo:2541092"/>
<dbReference type="PomBase" id="SPBC660.12c">
    <property type="gene designation" value="egt2"/>
</dbReference>
<dbReference type="VEuPathDB" id="FungiDB:SPBC660.12c"/>
<dbReference type="eggNOG" id="KOG1549">
    <property type="taxonomic scope" value="Eukaryota"/>
</dbReference>
<dbReference type="HOGENOM" id="CLU_003433_3_0_1"/>
<dbReference type="InParanoid" id="O94431"/>
<dbReference type="OMA" id="VCIFDVV"/>
<dbReference type="PhylomeDB" id="O94431"/>
<dbReference type="BioCyc" id="MetaCyc:MONOMER-18846"/>
<dbReference type="BRENDA" id="4.4.1.36">
    <property type="organism ID" value="5613"/>
</dbReference>
<dbReference type="UniPathway" id="UPA01014"/>
<dbReference type="PRO" id="PR:O94431"/>
<dbReference type="Proteomes" id="UP000002485">
    <property type="component" value="Chromosome II"/>
</dbReference>
<dbReference type="GO" id="GO:0005829">
    <property type="term" value="C:cytosol"/>
    <property type="evidence" value="ECO:0007005"/>
    <property type="project" value="PomBase"/>
</dbReference>
<dbReference type="GO" id="GO:0005634">
    <property type="term" value="C:nucleus"/>
    <property type="evidence" value="ECO:0007005"/>
    <property type="project" value="PomBase"/>
</dbReference>
<dbReference type="GO" id="GO:1990411">
    <property type="term" value="F:hercynylcysteine sulfoxide lyase activity (ergothioneine-forming)"/>
    <property type="evidence" value="ECO:0000315"/>
    <property type="project" value="PomBase"/>
</dbReference>
<dbReference type="GO" id="GO:0052699">
    <property type="term" value="P:ergothioneine biosynthetic process"/>
    <property type="evidence" value="ECO:0000315"/>
    <property type="project" value="PomBase"/>
</dbReference>
<dbReference type="GO" id="GO:1903257">
    <property type="term" value="P:selenoneine biosynthetic process"/>
    <property type="evidence" value="ECO:0000315"/>
    <property type="project" value="PomBase"/>
</dbReference>
<dbReference type="Gene3D" id="3.90.1150.10">
    <property type="entry name" value="Aspartate Aminotransferase, domain 1"/>
    <property type="match status" value="1"/>
</dbReference>
<dbReference type="Gene3D" id="3.40.640.10">
    <property type="entry name" value="Type I PLP-dependent aspartate aminotransferase-like (Major domain)"/>
    <property type="match status" value="1"/>
</dbReference>
<dbReference type="InterPro" id="IPR000192">
    <property type="entry name" value="Aminotrans_V_dom"/>
</dbReference>
<dbReference type="InterPro" id="IPR015424">
    <property type="entry name" value="PyrdxlP-dep_Trfase"/>
</dbReference>
<dbReference type="InterPro" id="IPR015421">
    <property type="entry name" value="PyrdxlP-dep_Trfase_major"/>
</dbReference>
<dbReference type="InterPro" id="IPR015422">
    <property type="entry name" value="PyrdxlP-dep_Trfase_small"/>
</dbReference>
<dbReference type="PANTHER" id="PTHR43092:SF2">
    <property type="entry name" value="HERCYNYLCYSTEINE SULFOXIDE LYASE"/>
    <property type="match status" value="1"/>
</dbReference>
<dbReference type="PANTHER" id="PTHR43092">
    <property type="entry name" value="L-CYSTEINE DESULFHYDRASE"/>
    <property type="match status" value="1"/>
</dbReference>
<dbReference type="Pfam" id="PF00266">
    <property type="entry name" value="Aminotran_5"/>
    <property type="match status" value="1"/>
</dbReference>
<dbReference type="SUPFAM" id="SSF53383">
    <property type="entry name" value="PLP-dependent transferases"/>
    <property type="match status" value="1"/>
</dbReference>
<gene>
    <name evidence="5" type="primary">egt2</name>
    <name evidence="8" type="ORF">SPBC660.12c</name>
</gene>
<evidence type="ECO:0000250" key="1">
    <source>
        <dbReference type="UniProtKB" id="A7UX13"/>
    </source>
</evidence>
<evidence type="ECO:0000250" key="2">
    <source>
        <dbReference type="UniProtKB" id="P23721"/>
    </source>
</evidence>
<evidence type="ECO:0000269" key="3">
    <source>
    </source>
</evidence>
<evidence type="ECO:0000269" key="4">
    <source>
    </source>
</evidence>
<evidence type="ECO:0000303" key="5">
    <source>
    </source>
</evidence>
<evidence type="ECO:0000305" key="6"/>
<evidence type="ECO:0000305" key="7">
    <source>
    </source>
</evidence>
<evidence type="ECO:0000312" key="8">
    <source>
        <dbReference type="PomBase" id="SPBC660.12c"/>
    </source>
</evidence>
<protein>
    <recommendedName>
        <fullName evidence="1">Hercynylcysteine sulfoxide lyase</fullName>
        <ecNumber evidence="1">4.4.1.-</ecNumber>
    </recommendedName>
    <alternativeName>
        <fullName evidence="5">Ergothioneine biosynthesis protein 2</fullName>
    </alternativeName>
    <alternativeName>
        <fullName evidence="5">PLP-binding cysteine desulfurase</fullName>
    </alternativeName>
    <alternativeName>
        <fullName evidence="1">PLP-dependent C-S lyase</fullName>
    </alternativeName>
</protein>